<keyword id="KW-0002">3D-structure</keyword>
<keyword id="KW-0131">Cell cycle</keyword>
<keyword id="KW-0132">Cell division</keyword>
<keyword id="KW-0137">Centromere</keyword>
<keyword id="KW-0158">Chromosome</keyword>
<keyword id="KW-0995">Kinetochore</keyword>
<keyword id="KW-0498">Mitosis</keyword>
<keyword id="KW-0539">Nucleus</keyword>
<keyword id="KW-0597">Phosphoprotein</keyword>
<keyword id="KW-1185">Reference proteome</keyword>
<name>CENPT_YEAST</name>
<accession>P43618</accession>
<accession>D6VTS9</accession>
<accession>Q6B2K8</accession>
<reference key="1">
    <citation type="journal article" date="1996" name="Yeast">
        <title>Analysis of a 36.2 kb DNA sequence including the right telomere of chromosome VI from Saccharomyces cerevisiae.</title>
        <authorList>
            <person name="Eki T."/>
            <person name="Naitou M."/>
            <person name="Hagiwara H."/>
            <person name="Ozawa M."/>
            <person name="Sasanuma S."/>
            <person name="Sasanuma M."/>
            <person name="Tsuchiya Y."/>
            <person name="Shibata T."/>
            <person name="Hanaoka F."/>
            <person name="Murakami Y."/>
        </authorList>
    </citation>
    <scope>NUCLEOTIDE SEQUENCE [GENOMIC DNA]</scope>
    <source>
        <strain>ATCC 204511 / S288c / AB972</strain>
    </source>
</reference>
<reference key="2">
    <citation type="journal article" date="1995" name="Nat. Genet.">
        <title>Analysis of the nucleotide sequence of chromosome VI from Saccharomyces cerevisiae.</title>
        <authorList>
            <person name="Murakami Y."/>
            <person name="Naitou M."/>
            <person name="Hagiwara H."/>
            <person name="Shibata T."/>
            <person name="Ozawa M."/>
            <person name="Sasanuma S."/>
            <person name="Sasanuma M."/>
            <person name="Tsuchiya Y."/>
            <person name="Soeda E."/>
            <person name="Yokoyama K."/>
            <person name="Yamazaki M."/>
            <person name="Tashiro H."/>
            <person name="Eki T."/>
        </authorList>
    </citation>
    <scope>NUCLEOTIDE SEQUENCE [LARGE SCALE GENOMIC DNA]</scope>
    <source>
        <strain>ATCC 204508 / S288c</strain>
    </source>
</reference>
<reference key="3">
    <citation type="journal article" date="2014" name="G3 (Bethesda)">
        <title>The reference genome sequence of Saccharomyces cerevisiae: Then and now.</title>
        <authorList>
            <person name="Engel S.R."/>
            <person name="Dietrich F.S."/>
            <person name="Fisk D.G."/>
            <person name="Binkley G."/>
            <person name="Balakrishnan R."/>
            <person name="Costanzo M.C."/>
            <person name="Dwight S.S."/>
            <person name="Hitz B.C."/>
            <person name="Karra K."/>
            <person name="Nash R.S."/>
            <person name="Weng S."/>
            <person name="Wong E.D."/>
            <person name="Lloyd P."/>
            <person name="Skrzypek M.S."/>
            <person name="Miyasato S.R."/>
            <person name="Simison M."/>
            <person name="Cherry J.M."/>
        </authorList>
    </citation>
    <scope>GENOME REANNOTATION</scope>
    <source>
        <strain>ATCC 204508 / S288c</strain>
    </source>
</reference>
<reference key="4">
    <citation type="journal article" date="2007" name="Genome Res.">
        <title>Approaching a complete repository of sequence-verified protein-encoding clones for Saccharomyces cerevisiae.</title>
        <authorList>
            <person name="Hu Y."/>
            <person name="Rolfs A."/>
            <person name="Bhullar B."/>
            <person name="Murthy T.V.S."/>
            <person name="Zhu C."/>
            <person name="Berger M.F."/>
            <person name="Camargo A.A."/>
            <person name="Kelley F."/>
            <person name="McCarron S."/>
            <person name="Jepson D."/>
            <person name="Richardson A."/>
            <person name="Raphael J."/>
            <person name="Moreira D."/>
            <person name="Taycher E."/>
            <person name="Zuo D."/>
            <person name="Mohr S."/>
            <person name="Kane M.F."/>
            <person name="Williamson J."/>
            <person name="Simpson A.J.G."/>
            <person name="Bulyk M.L."/>
            <person name="Harlow E."/>
            <person name="Marsischky G."/>
            <person name="Kolodner R.D."/>
            <person name="LaBaer J."/>
        </authorList>
    </citation>
    <scope>NUCLEOTIDE SEQUENCE [GENOMIC DNA]</scope>
    <source>
        <strain>ATCC 204508 / S288c</strain>
    </source>
</reference>
<reference key="5">
    <citation type="journal article" date="2003" name="Genes Dev.">
        <title>Hierarchical assembly of the budding yeast kinetochore from multiple subcomplexes.</title>
        <authorList>
            <person name="De Wulf P."/>
            <person name="McAinsh A.D."/>
            <person name="Sorger P.K."/>
        </authorList>
    </citation>
    <scope>INTERACTION WITH NNF1</scope>
    <scope>IDENTIFICATION BY MASS SPECTROMETRY</scope>
</reference>
<reference key="6">
    <citation type="journal article" date="2003" name="Nature">
        <title>Global analysis of protein localization in budding yeast.</title>
        <authorList>
            <person name="Huh W.-K."/>
            <person name="Falvo J.V."/>
            <person name="Gerke L.C."/>
            <person name="Carroll A.S."/>
            <person name="Howson R.W."/>
            <person name="Weissman J.S."/>
            <person name="O'Shea E.K."/>
        </authorList>
    </citation>
    <scope>SUBCELLULAR LOCATION [LARGE SCALE ANALYSIS]</scope>
</reference>
<reference key="7">
    <citation type="journal article" date="2003" name="Nature">
        <title>Global analysis of protein expression in yeast.</title>
        <authorList>
            <person name="Ghaemmaghami S."/>
            <person name="Huh W.-K."/>
            <person name="Bower K."/>
            <person name="Howson R.W."/>
            <person name="Belle A."/>
            <person name="Dephoure N."/>
            <person name="O'Shea E.K."/>
            <person name="Weissman J.S."/>
        </authorList>
    </citation>
    <scope>LEVEL OF PROTEIN EXPRESSION [LARGE SCALE ANALYSIS]</scope>
</reference>
<reference key="8">
    <citation type="journal article" date="2009" name="Science">
        <title>Global analysis of Cdk1 substrate phosphorylation sites provides insights into evolution.</title>
        <authorList>
            <person name="Holt L.J."/>
            <person name="Tuch B.B."/>
            <person name="Villen J."/>
            <person name="Johnson A.D."/>
            <person name="Gygi S.P."/>
            <person name="Morgan D.O."/>
        </authorList>
    </citation>
    <scope>IDENTIFICATION BY MASS SPECTROMETRY [LARGE SCALE ANALYSIS]</scope>
</reference>
<reference key="9">
    <citation type="journal article" date="2012" name="Nat. Cell Biol.">
        <title>CENP-T proteins are conserved centromere receptors of the Ndc80 complex.</title>
        <authorList>
            <person name="Schleiffer A."/>
            <person name="Maier M."/>
            <person name="Litos G."/>
            <person name="Lampert F."/>
            <person name="Hornung P."/>
            <person name="Mechtler K."/>
            <person name="Westermann S."/>
        </authorList>
    </citation>
    <scope>FUNCTION</scope>
    <scope>IDENTIFICATION IN CCAN</scope>
    <scope>SUBUNIT</scope>
    <scope>INTERACTION WITH SPC24 AND SPC25</scope>
</reference>
<reference key="10">
    <citation type="journal article" date="2012" name="Nat. Cell Biol.">
        <title>Cnn1 inhibits the interactions between the KMN complexes of the yeast kinetochore.</title>
        <authorList>
            <person name="Bock L.J."/>
            <person name="Pagliuca C."/>
            <person name="Kobayashi N."/>
            <person name="Grove R.A."/>
            <person name="Oku Y."/>
            <person name="Shrestha K."/>
            <person name="Alfieri C."/>
            <person name="Golfieri C."/>
            <person name="Oldani A."/>
            <person name="Dal Maschio M."/>
            <person name="Bermejo R."/>
            <person name="Hazbun T.R."/>
            <person name="Tanaka T.U."/>
            <person name="De Wulf P."/>
        </authorList>
    </citation>
    <scope>FUNCTION</scope>
    <scope>INTERACTION WITH THE NDC80 COMPLEX</scope>
    <scope>SUBCELLULAR LOCATION</scope>
    <scope>INDUCTION</scope>
    <scope>DISRUPTION PHENOTYPE</scope>
    <scope>PHOSPHORYLATION AT THR-14; SER-17; SER-74; THR-174; SER-177 AND SER-269</scope>
</reference>
<reference key="11">
    <citation type="journal article" date="2013" name="Nat. Cell Biol.">
        <authorList>
            <person name="Bock L.J."/>
            <person name="Pagliuca C."/>
            <person name="Kobayashi N."/>
            <person name="Grove R.A."/>
            <person name="Oku Y."/>
            <person name="Shrestha K."/>
            <person name="Alfieri C."/>
            <person name="Golfieri C."/>
            <person name="Oldani A."/>
            <person name="Dal Maschio M."/>
            <person name="Bermejo R."/>
            <person name="Hazbun T.R."/>
            <person name="Tanaka T.U."/>
            <person name="De Wulf P."/>
        </authorList>
    </citation>
    <scope>ERRATUM OF PUBMED:22561345</scope>
</reference>
<reference key="12">
    <citation type="journal article" date="2020" name="Cell Rep.">
        <title>C-Terminal Motifs of the MTW1 Complex Cooperatively Stabilize Outer Kinetochore Assembly in Budding Yeast.</title>
        <authorList>
            <person name="Ghodgaonkar-Steger M."/>
            <person name="Potocnjak M."/>
            <person name="Zimniak T."/>
            <person name="Fischboeck-Halwachs J."/>
            <person name="Solis-Mezarino V."/>
            <person name="Singh S."/>
            <person name="Speljko T."/>
            <person name="Hagemann G."/>
            <person name="Drexler D.J."/>
            <person name="Witte G."/>
            <person name="Herzog F."/>
        </authorList>
    </citation>
    <scope>INTERACTION WITH SPC24; SPC25 AND THE KNL1 COMPLEX</scope>
</reference>
<reference evidence="13" key="13">
    <citation type="journal article" date="2013" name="EMBO J.">
        <title>A structural basis for kinetochore recruitment of the Ndc80 complex via two distinct centromere receptors.</title>
        <authorList>
            <person name="Malvezzi F."/>
            <person name="Litos G."/>
            <person name="Schleiffer A."/>
            <person name="Heuck A."/>
            <person name="Mechtler K."/>
            <person name="Clausen T."/>
            <person name="Westermann S."/>
        </authorList>
    </citation>
    <scope>X-RAY CRYSTALLOGRAPHY (2.01 ANGSTROMS) OF 60-84 IN COMPLEX WITH SPC24 AND SPC25</scope>
    <scope>FUNCTION</scope>
    <scope>PHOSPHORYLATION AT SER-2; THR-14; SER-17; THR-21; THR-42; SER-50; SER-52; THR-53; SER-55; SER-74; THR-86; THR-88; THR-91; SER-115; THR-129; THR-134; SER-135; THR-139; SER-153; THR-174; SER-177; THR-191; SER-192 AND SER-268</scope>
    <scope>MUTAGENESIS OF SER-74</scope>
</reference>
<comment type="function">
    <text evidence="5 6 7">Component of the kinetochore, a multiprotein complex that assembles on centromeric DNA and attaches chromosomes to spindle microtubules, mediating chromosome segregation and sister chromatid segregation during meiosis and mitosis. Component of the inner kinetochore constitutive centromere-associated network (CCAN), which serves as a structural platform for outer kinetochore assembly (PubMed:22561346). Modulates outer kinetochore KMN network activity by regulating interactions within the network (PubMed:23334295, PubMed:22561345).</text>
</comment>
<comment type="subunit">
    <text evidence="4 5 6 7 8">Component of the inner kinetochore constitutive centromere-associated network (CCAN) (also known as central kinetochore CTF19 complex in yeast), which is composed of at least AME1, CHL4, CNN1, CTF3, CTF19, IML3, MCM16, MCM21, MCM22, MHF1, MHF2, MIF2, NKP1, NKP2, OKP1 and WIP1 (PubMed:14633972, PubMed:22561346). Interacts (via N-terminus) with the outer kinetochore NDC80 complex subunits SPC24 (via C-terminus) and SPC25 (via C-terminus); the interaction is direct and contributes to the correct spatiotemporal organization of the KMN network (PubMed:22561346, PubMed:22561345, PubMed:32997987, PubMed:23334295). Interacts with outer kinetochore MIS12 complex subunit NNF1 (PubMed:14633972). Interacts (via N-terminus) with the KNL1 complex (PubMed:32997987).</text>
</comment>
<comment type="interaction">
    <interactant intactId="EBI-23036">
        <id>P43618</id>
    </interactant>
    <interactant intactId="EBI-12377">
        <id>P33895</id>
        <label>NUF2</label>
    </interactant>
    <organismsDiffer>false</organismsDiffer>
    <experiments>2</experiments>
</comment>
<comment type="subcellular location">
    <subcellularLocation>
        <location evidence="2">Nucleus</location>
    </subcellularLocation>
    <subcellularLocation>
        <location evidence="5 12">Chromosome</location>
        <location evidence="5 12">Centromere</location>
        <location evidence="5 12">Kinetochore</location>
    </subcellularLocation>
    <text evidence="5">Enriched at the kinetochore in anaphase.</text>
</comment>
<comment type="induction">
    <text evidence="5">Levels are constant throughout the cell cycle (at protein level).</text>
</comment>
<comment type="PTM">
    <text evidence="5 7">Phosphorylation of the C-terminus by MPS1 kinase regulates interaction with the outer kinetochore Ndc80 complex (PubMed:23334295). Phosphorylation levels rise from S-phase and through metaphase, the protein is thendephosphorylated in anaphase (PubMed:22561345).</text>
</comment>
<comment type="disruption phenotype">
    <text evidence="5">Decreases S-phase duration and leads to mild chromosome segregation defects.</text>
</comment>
<comment type="miscellaneous">
    <text evidence="3">Present with 1300 molecules/cell in log phase SD medium.</text>
</comment>
<comment type="similarity">
    <text evidence="10">Belongs to the CENP-T/CNN1 family.</text>
</comment>
<dbReference type="EMBL" id="D50617">
    <property type="protein sequence ID" value="BAA09285.1"/>
    <property type="molecule type" value="Genomic_DNA"/>
</dbReference>
<dbReference type="EMBL" id="AY692722">
    <property type="protein sequence ID" value="AAT92741.1"/>
    <property type="molecule type" value="Genomic_DNA"/>
</dbReference>
<dbReference type="EMBL" id="BK006940">
    <property type="protein sequence ID" value="DAA12489.1"/>
    <property type="molecule type" value="Genomic_DNA"/>
</dbReference>
<dbReference type="PIR" id="S56301">
    <property type="entry name" value="S56301"/>
</dbReference>
<dbReference type="RefSeq" id="NP_116704.1">
    <property type="nucleotide sequence ID" value="NM_001180011.1"/>
</dbReference>
<dbReference type="PDB" id="4GEQ">
    <property type="method" value="X-ray"/>
    <property type="resolution" value="2.01 A"/>
    <property type="chains" value="E/F=60-84"/>
</dbReference>
<dbReference type="PDB" id="6WUC">
    <property type="method" value="EM"/>
    <property type="resolution" value="3.23 A"/>
    <property type="chains" value="T=1-361"/>
</dbReference>
<dbReference type="PDB" id="6YPC">
    <property type="method" value="X-ray"/>
    <property type="resolution" value="2.90 A"/>
    <property type="chains" value="T=1-361"/>
</dbReference>
<dbReference type="PDB" id="8OVW">
    <property type="method" value="EM"/>
    <property type="resolution" value="3.40 A"/>
    <property type="chains" value="T=1-361"/>
</dbReference>
<dbReference type="PDB" id="8OW0">
    <property type="method" value="EM"/>
    <property type="resolution" value="3.40 A"/>
    <property type="chains" value="T=1-361"/>
</dbReference>
<dbReference type="PDB" id="8OW1">
    <property type="method" value="EM"/>
    <property type="resolution" value="3.70 A"/>
    <property type="chains" value="T/TT=1-361"/>
</dbReference>
<dbReference type="PDBsum" id="4GEQ"/>
<dbReference type="PDBsum" id="6WUC"/>
<dbReference type="PDBsum" id="6YPC"/>
<dbReference type="PDBsum" id="8OVW"/>
<dbReference type="PDBsum" id="8OW0"/>
<dbReference type="PDBsum" id="8OW1"/>
<dbReference type="EMDB" id="EMD-17224"/>
<dbReference type="EMDB" id="EMD-17226"/>
<dbReference type="EMDB" id="EMD-17227"/>
<dbReference type="EMDB" id="EMD-21910"/>
<dbReference type="SMR" id="P43618"/>
<dbReference type="BioGRID" id="31204">
    <property type="interactions" value="142"/>
</dbReference>
<dbReference type="ComplexPortal" id="CPX-2533">
    <property type="entry name" value="Kinetochore CCAN complex"/>
</dbReference>
<dbReference type="DIP" id="DIP-5186N"/>
<dbReference type="FunCoup" id="P43618">
    <property type="interactions" value="73"/>
</dbReference>
<dbReference type="IntAct" id="P43618">
    <property type="interactions" value="7"/>
</dbReference>
<dbReference type="MINT" id="P43618"/>
<dbReference type="STRING" id="4932.YFR046C"/>
<dbReference type="iPTMnet" id="P43618"/>
<dbReference type="PaxDb" id="4932-YFR046C"/>
<dbReference type="PeptideAtlas" id="P43618"/>
<dbReference type="EnsemblFungi" id="YFR046C_mRNA">
    <property type="protein sequence ID" value="YFR046C"/>
    <property type="gene ID" value="YFR046C"/>
</dbReference>
<dbReference type="GeneID" id="850607"/>
<dbReference type="KEGG" id="sce:YFR046C"/>
<dbReference type="AGR" id="SGD:S000001942"/>
<dbReference type="SGD" id="S000001942">
    <property type="gene designation" value="CNN1"/>
</dbReference>
<dbReference type="VEuPathDB" id="FungiDB:YFR046C"/>
<dbReference type="eggNOG" id="ENOG502S7KF">
    <property type="taxonomic scope" value="Eukaryota"/>
</dbReference>
<dbReference type="HOGENOM" id="CLU_070156_0_0_1"/>
<dbReference type="InParanoid" id="P43618"/>
<dbReference type="OMA" id="XTEVSEI"/>
<dbReference type="OrthoDB" id="4063473at2759"/>
<dbReference type="BioCyc" id="YEAST:G3O-30493-MONOMER"/>
<dbReference type="BioGRID-ORCS" id="850607">
    <property type="hits" value="7 hits in 10 CRISPR screens"/>
</dbReference>
<dbReference type="PRO" id="PR:P43618"/>
<dbReference type="Proteomes" id="UP000002311">
    <property type="component" value="Chromosome VI"/>
</dbReference>
<dbReference type="RNAct" id="P43618">
    <property type="molecule type" value="protein"/>
</dbReference>
<dbReference type="GO" id="GO:0000776">
    <property type="term" value="C:kinetochore"/>
    <property type="evidence" value="ECO:0000314"/>
    <property type="project" value="SGD"/>
</dbReference>
<dbReference type="GO" id="GO:0005634">
    <property type="term" value="C:nucleus"/>
    <property type="evidence" value="ECO:0007005"/>
    <property type="project" value="SGD"/>
</dbReference>
<dbReference type="GO" id="GO:0019237">
    <property type="term" value="F:centromeric DNA binding"/>
    <property type="evidence" value="ECO:0000314"/>
    <property type="project" value="SGD"/>
</dbReference>
<dbReference type="GO" id="GO:0044877">
    <property type="term" value="F:protein-containing complex binding"/>
    <property type="evidence" value="ECO:0000314"/>
    <property type="project" value="SGD"/>
</dbReference>
<dbReference type="GO" id="GO:0051301">
    <property type="term" value="P:cell division"/>
    <property type="evidence" value="ECO:0007669"/>
    <property type="project" value="UniProtKB-KW"/>
</dbReference>
<dbReference type="GO" id="GO:0007059">
    <property type="term" value="P:chromosome segregation"/>
    <property type="evidence" value="ECO:0000353"/>
    <property type="project" value="SGD"/>
</dbReference>
<dbReference type="GO" id="GO:1905560">
    <property type="term" value="P:negative regulation of kinetochore assembly"/>
    <property type="evidence" value="ECO:0000315"/>
    <property type="project" value="SGD"/>
</dbReference>
<dbReference type="CDD" id="cd22574">
    <property type="entry name" value="CNN1_HFD"/>
    <property type="match status" value="1"/>
</dbReference>
<feature type="chain" id="PRO_0000202697" description="Inner kinetochore subunit CNN1">
    <location>
        <begin position="1"/>
        <end position="361"/>
    </location>
</feature>
<feature type="region of interest" description="Disordered" evidence="1">
    <location>
        <begin position="1"/>
        <end position="22"/>
    </location>
</feature>
<feature type="region of interest" description="Interacts with the NDC80 complex subunits SPC24 and SPC25 and with the KNL1 complex" evidence="6 8 11">
    <location>
        <begin position="60"/>
        <end position="84"/>
    </location>
</feature>
<feature type="region of interest" description="Disordered" evidence="1">
    <location>
        <begin position="103"/>
        <end position="132"/>
    </location>
</feature>
<feature type="region of interest" description="Disordered" evidence="1">
    <location>
        <begin position="193"/>
        <end position="255"/>
    </location>
</feature>
<feature type="compositionally biased region" description="Basic and acidic residues" evidence="1">
    <location>
        <begin position="111"/>
        <end position="121"/>
    </location>
</feature>
<feature type="compositionally biased region" description="Polar residues" evidence="1">
    <location>
        <begin position="122"/>
        <end position="132"/>
    </location>
</feature>
<feature type="compositionally biased region" description="Acidic residues" evidence="1">
    <location>
        <begin position="219"/>
        <end position="254"/>
    </location>
</feature>
<feature type="modified residue" description="Phosphoserine; by CDK1" evidence="7">
    <location>
        <position position="2"/>
    </location>
</feature>
<feature type="modified residue" description="Phosphothreonine; by CDK1 and MPS1" evidence="5 7">
    <location>
        <position position="14"/>
    </location>
</feature>
<feature type="modified residue" description="Phosphoserine; by CDK1 and MPS1" evidence="5 7">
    <location>
        <position position="17"/>
    </location>
</feature>
<feature type="modified residue" description="Phosphothreonine; by CDK1" evidence="7">
    <location>
        <position position="21"/>
    </location>
</feature>
<feature type="modified residue" description="Phosphothreonine; by CDK1" evidence="7">
    <location>
        <position position="42"/>
    </location>
</feature>
<feature type="modified residue" description="Phosphoserine; by CDK1 and MPS1" evidence="7">
    <location>
        <position position="50"/>
    </location>
</feature>
<feature type="modified residue" description="Phosphoserine; by CDK1" evidence="7">
    <location>
        <position position="52"/>
    </location>
</feature>
<feature type="modified residue" description="Phosphothreonine; by MPS1" evidence="7">
    <location>
        <position position="53"/>
    </location>
</feature>
<feature type="modified residue" description="Phosphoserine; by CDK1" evidence="7">
    <location>
        <position position="55"/>
    </location>
</feature>
<feature type="modified residue" description="Phosphoserine; by CDK1 and MPS1" evidence="5 7">
    <location>
        <position position="74"/>
    </location>
</feature>
<feature type="modified residue" description="Phosphothreonine; by MPS1" evidence="7">
    <location>
        <position position="86"/>
    </location>
</feature>
<feature type="modified residue" description="Phosphothreonine; by MPS1" evidence="7">
    <location>
        <position position="88"/>
    </location>
</feature>
<feature type="modified residue" description="Phosphothreonine; by CDK1 and MPS1" evidence="7">
    <location>
        <position position="91"/>
    </location>
</feature>
<feature type="modified residue" description="Phosphoserine; by CDK1" evidence="7">
    <location>
        <position position="115"/>
    </location>
</feature>
<feature type="modified residue" description="Phosphothreonine; by CDK1 and MPS1" evidence="7">
    <location>
        <position position="129"/>
    </location>
</feature>
<feature type="modified residue" description="Phosphothreonine; by MPS1" evidence="7">
    <location>
        <position position="134"/>
    </location>
</feature>
<feature type="modified residue" description="Phosphoserine; by MPS1" evidence="7">
    <location>
        <position position="135"/>
    </location>
</feature>
<feature type="modified residue" description="Phosphothreonine; by CDK1 and MPS1" evidence="7">
    <location>
        <position position="139"/>
    </location>
</feature>
<feature type="modified residue" description="Phosphoserine; by MPS1" evidence="7">
    <location>
        <position position="153"/>
    </location>
</feature>
<feature type="modified residue" description="Phosphothreonine; by MPS1" evidence="5 7">
    <location>
        <position position="174"/>
    </location>
</feature>
<feature type="modified residue" description="Phosphoserine; by CDK1" evidence="5 7">
    <location>
        <position position="177"/>
    </location>
</feature>
<feature type="modified residue" description="Phosphothreonine; by CDK1" evidence="7">
    <location>
        <position position="191"/>
    </location>
</feature>
<feature type="modified residue" description="Phosphoserine; by CDK1" evidence="7">
    <location>
        <position position="192"/>
    </location>
</feature>
<feature type="modified residue" description="Phosphoserine; by CDK1" evidence="7">
    <location>
        <position position="268"/>
    </location>
</feature>
<feature type="modified residue" description="Phosphoserine; by MPS1 and IPL1" evidence="5">
    <location>
        <position position="269"/>
    </location>
</feature>
<feature type="mutagenesis site" description="Increases interaction with SPC24-SPC25." evidence="7">
    <original>S</original>
    <variation>A</variation>
    <location>
        <position position="74"/>
    </location>
</feature>
<feature type="mutagenesis site" description="Abolishes interaction with SPC24-SPC25." evidence="7">
    <original>S</original>
    <variation>D</variation>
    <location>
        <position position="74"/>
    </location>
</feature>
<feature type="sequence conflict" description="In Ref. 2; AAT92741." evidence="10" ref="2">
    <original>A</original>
    <variation>T</variation>
    <location>
        <position position="8"/>
    </location>
</feature>
<feature type="helix" evidence="14">
    <location>
        <begin position="63"/>
        <end position="78"/>
    </location>
</feature>
<feature type="helix" evidence="15">
    <location>
        <begin position="275"/>
        <end position="281"/>
    </location>
</feature>
<feature type="helix" evidence="15">
    <location>
        <begin position="283"/>
        <end position="288"/>
    </location>
</feature>
<feature type="helix" evidence="15">
    <location>
        <begin position="295"/>
        <end position="315"/>
    </location>
</feature>
<feature type="helix" evidence="15">
    <location>
        <begin position="323"/>
        <end position="330"/>
    </location>
</feature>
<feature type="helix" evidence="15">
    <location>
        <begin position="337"/>
        <end position="347"/>
    </location>
</feature>
<feature type="helix" evidence="15">
    <location>
        <begin position="350"/>
        <end position="359"/>
    </location>
</feature>
<protein>
    <recommendedName>
        <fullName evidence="10">Inner kinetochore subunit CNN1</fullName>
    </recommendedName>
    <alternativeName>
        <fullName evidence="9">CENP-T homolog</fullName>
    </alternativeName>
    <alternativeName>
        <fullName>Co-purified with NNF1 protein 1</fullName>
    </alternativeName>
    <alternativeName>
        <fullName evidence="10">Constitutive centromere-associated network protein CNN1</fullName>
    </alternativeName>
</protein>
<proteinExistence type="evidence at protein level"/>
<organism>
    <name type="scientific">Saccharomyces cerevisiae (strain ATCC 204508 / S288c)</name>
    <name type="common">Baker's yeast</name>
    <dbReference type="NCBI Taxonomy" id="559292"/>
    <lineage>
        <taxon>Eukaryota</taxon>
        <taxon>Fungi</taxon>
        <taxon>Dikarya</taxon>
        <taxon>Ascomycota</taxon>
        <taxon>Saccharomycotina</taxon>
        <taxon>Saccharomycetes</taxon>
        <taxon>Saccharomycetales</taxon>
        <taxon>Saccharomycetaceae</taxon>
        <taxon>Saccharomyces</taxon>
    </lineage>
</organism>
<evidence type="ECO:0000256" key="1">
    <source>
        <dbReference type="SAM" id="MobiDB-lite"/>
    </source>
</evidence>
<evidence type="ECO:0000269" key="2">
    <source>
    </source>
</evidence>
<evidence type="ECO:0000269" key="3">
    <source>
    </source>
</evidence>
<evidence type="ECO:0000269" key="4">
    <source>
    </source>
</evidence>
<evidence type="ECO:0000269" key="5">
    <source>
    </source>
</evidence>
<evidence type="ECO:0000269" key="6">
    <source>
    </source>
</evidence>
<evidence type="ECO:0000269" key="7">
    <source>
    </source>
</evidence>
<evidence type="ECO:0000269" key="8">
    <source>
    </source>
</evidence>
<evidence type="ECO:0000303" key="9">
    <source>
    </source>
</evidence>
<evidence type="ECO:0000305" key="10"/>
<evidence type="ECO:0000305" key="11">
    <source>
    </source>
</evidence>
<evidence type="ECO:0000305" key="12">
    <source>
    </source>
</evidence>
<evidence type="ECO:0007744" key="13">
    <source>
        <dbReference type="PDB" id="4GEQ"/>
    </source>
</evidence>
<evidence type="ECO:0007829" key="14">
    <source>
        <dbReference type="PDB" id="4GEQ"/>
    </source>
</evidence>
<evidence type="ECO:0007829" key="15">
    <source>
        <dbReference type="PDB" id="6YPC"/>
    </source>
</evidence>
<gene>
    <name type="primary">CNN1</name>
    <name type="ordered locus">YFR046C</name>
</gene>
<sequence length="361" mass="41313">MSTPRKAAGNNENTEVSEIRTPFRERALEEQRLKDEVLIRNTPGYRKLLSASTKSHDILNKDPNEVRSFLQDLSQVLARKSQGNDTTTNKTQARNLIDELAYEESQPEENELLRSRSEKLTDNNIGNETQPDYTSLSQTVFAKLQERDKGLKSRKIDPIIIQDVPTTGHEDELTVHSPDKANSISMEVLRTSPSIGMDQVDEPPVRDPVPISITQQEEPLSEDLPSDDKEETEEAENEDYSFENTSDENLDDIGNDPIRLNVPAVRRSSIKPLQIMDLKHLTRQFLNENRIILPKQTWSTIQEESLNIMDFLKQKIGTLQKQELVDSFIDMGIINNVDDMFELAHELLPLELQSRIESYLF</sequence>